<organism>
    <name type="scientific">Arabidopsis thaliana</name>
    <name type="common">Mouse-ear cress</name>
    <dbReference type="NCBI Taxonomy" id="3702"/>
    <lineage>
        <taxon>Eukaryota</taxon>
        <taxon>Viridiplantae</taxon>
        <taxon>Streptophyta</taxon>
        <taxon>Embryophyta</taxon>
        <taxon>Tracheophyta</taxon>
        <taxon>Spermatophyta</taxon>
        <taxon>Magnoliopsida</taxon>
        <taxon>eudicotyledons</taxon>
        <taxon>Gunneridae</taxon>
        <taxon>Pentapetalae</taxon>
        <taxon>rosids</taxon>
        <taxon>malvids</taxon>
        <taxon>Brassicales</taxon>
        <taxon>Brassicaceae</taxon>
        <taxon>Camelineae</taxon>
        <taxon>Arabidopsis</taxon>
    </lineage>
</organism>
<dbReference type="EMBL" id="AC016827">
    <property type="protein sequence ID" value="AAF27000.1"/>
    <property type="molecule type" value="Genomic_DNA"/>
</dbReference>
<dbReference type="EMBL" id="CP002686">
    <property type="protein sequence ID" value="AEE74480.1"/>
    <property type="molecule type" value="Genomic_DNA"/>
</dbReference>
<dbReference type="EMBL" id="AF367275">
    <property type="protein sequence ID" value="AAK56264.1"/>
    <property type="molecule type" value="mRNA"/>
</dbReference>
<dbReference type="EMBL" id="AY059159">
    <property type="protein sequence ID" value="AAL15384.1"/>
    <property type="molecule type" value="mRNA"/>
</dbReference>
<dbReference type="RefSeq" id="NP_566296.1">
    <molecule id="Q9M903-1"/>
    <property type="nucleotide sequence ID" value="NM_111576.5"/>
</dbReference>
<dbReference type="BioGRID" id="5216">
    <property type="interactions" value="1"/>
</dbReference>
<dbReference type="FunCoup" id="Q9M903">
    <property type="interactions" value="1565"/>
</dbReference>
<dbReference type="STRING" id="3702.Q9M903"/>
<dbReference type="TCDB" id="1.B.82.1.1">
    <property type="family name" value="the chloroplast trigalactosyldiacylglycerol-4 porin (tgd4) family"/>
</dbReference>
<dbReference type="PaxDb" id="3702-AT3G06960.1"/>
<dbReference type="ProteomicsDB" id="234229">
    <molecule id="Q9M903-1"/>
</dbReference>
<dbReference type="DNASU" id="819881"/>
<dbReference type="EnsemblPlants" id="AT3G06960.1">
    <molecule id="Q9M903-1"/>
    <property type="protein sequence ID" value="AT3G06960.1"/>
    <property type="gene ID" value="AT3G06960"/>
</dbReference>
<dbReference type="GeneID" id="819881"/>
<dbReference type="Gramene" id="AT3G06960.1">
    <molecule id="Q9M903-1"/>
    <property type="protein sequence ID" value="AT3G06960.1"/>
    <property type="gene ID" value="AT3G06960"/>
</dbReference>
<dbReference type="KEGG" id="ath:AT3G06960"/>
<dbReference type="Araport" id="AT3G06960"/>
<dbReference type="TAIR" id="AT3G06960">
    <property type="gene designation" value="PDE320"/>
</dbReference>
<dbReference type="eggNOG" id="ENOG502R4W6">
    <property type="taxonomic scope" value="Eukaryota"/>
</dbReference>
<dbReference type="HOGENOM" id="CLU_046616_0_0_1"/>
<dbReference type="InParanoid" id="Q9M903"/>
<dbReference type="OMA" id="MDGGGFW"/>
<dbReference type="PhylomeDB" id="Q9M903"/>
<dbReference type="PRO" id="PR:Q9M903"/>
<dbReference type="Proteomes" id="UP000006548">
    <property type="component" value="Chromosome 3"/>
</dbReference>
<dbReference type="ExpressionAtlas" id="Q9M903">
    <property type="expression patterns" value="baseline and differential"/>
</dbReference>
<dbReference type="GO" id="GO:0009507">
    <property type="term" value="C:chloroplast"/>
    <property type="evidence" value="ECO:0000314"/>
    <property type="project" value="TAIR"/>
</dbReference>
<dbReference type="GO" id="GO:0009941">
    <property type="term" value="C:chloroplast envelope"/>
    <property type="evidence" value="ECO:0000314"/>
    <property type="project" value="TAIR"/>
</dbReference>
<dbReference type="GO" id="GO:0009707">
    <property type="term" value="C:chloroplast outer membrane"/>
    <property type="evidence" value="ECO:0000314"/>
    <property type="project" value="TAIR"/>
</dbReference>
<dbReference type="GO" id="GO:0005829">
    <property type="term" value="C:cytosol"/>
    <property type="evidence" value="ECO:0007005"/>
    <property type="project" value="TAIR"/>
</dbReference>
<dbReference type="GO" id="GO:0005783">
    <property type="term" value="C:endoplasmic reticulum"/>
    <property type="evidence" value="ECO:0000314"/>
    <property type="project" value="TAIR"/>
</dbReference>
<dbReference type="GO" id="GO:0016020">
    <property type="term" value="C:membrane"/>
    <property type="evidence" value="ECO:0000314"/>
    <property type="project" value="TAIR"/>
</dbReference>
<dbReference type="GO" id="GO:0009536">
    <property type="term" value="C:plastid"/>
    <property type="evidence" value="ECO:0007005"/>
    <property type="project" value="TAIR"/>
</dbReference>
<dbReference type="GO" id="GO:0070300">
    <property type="term" value="F:phosphatidic acid binding"/>
    <property type="evidence" value="ECO:0000314"/>
    <property type="project" value="TAIR"/>
</dbReference>
<dbReference type="GO" id="GO:0042803">
    <property type="term" value="F:protein homodimerization activity"/>
    <property type="evidence" value="ECO:0000314"/>
    <property type="project" value="TAIR"/>
</dbReference>
<dbReference type="GO" id="GO:0034196">
    <property type="term" value="P:acylglycerol transport"/>
    <property type="evidence" value="ECO:0000315"/>
    <property type="project" value="TAIR"/>
</dbReference>
<dbReference type="GO" id="GO:1990052">
    <property type="term" value="P:ER to chloroplast lipid transport"/>
    <property type="evidence" value="ECO:0000315"/>
    <property type="project" value="TAIR"/>
</dbReference>
<dbReference type="InterPro" id="IPR044160">
    <property type="entry name" value="TGD4-like"/>
</dbReference>
<dbReference type="PANTHER" id="PTHR34954">
    <property type="entry name" value="EXPRESSED PROTEIN"/>
    <property type="match status" value="1"/>
</dbReference>
<dbReference type="PANTHER" id="PTHR34954:SF4">
    <property type="entry name" value="PROTEIN TRIGALACTOSYLDIACYLGLYCEROL 4, CHLOROPLASTIC"/>
    <property type="match status" value="1"/>
</dbReference>
<evidence type="ECO:0000255" key="1"/>
<evidence type="ECO:0000269" key="2">
    <source>
    </source>
</evidence>
<evidence type="ECO:0000269" key="3">
    <source>
    </source>
</evidence>
<evidence type="ECO:0000269" key="4">
    <source>
    </source>
</evidence>
<evidence type="ECO:0000269" key="5">
    <source>
    </source>
</evidence>
<evidence type="ECO:0000269" key="6">
    <source>
    </source>
</evidence>
<evidence type="ECO:0000303" key="7">
    <source>
    </source>
</evidence>
<evidence type="ECO:0000312" key="8">
    <source>
        <dbReference type="Araport" id="AT3G06960"/>
    </source>
</evidence>
<evidence type="ECO:0000312" key="9">
    <source>
        <dbReference type="EMBL" id="AAF27000.1"/>
    </source>
</evidence>
<name>TGD4_ARATH</name>
<comment type="function">
    <text evidence="2 3 4 5">Involved in lipid transfer from the endoplasmic reticulum (ER) to plastids. Specifically binds phosphatidic acid (PtdOH).</text>
</comment>
<comment type="subunit">
    <text evidence="5 6">Homodimer. Forms dimeric beta-barrel (PubMed:23297418). Interacts with TGD5 (PubMed:26410300).</text>
</comment>
<comment type="subcellular location">
    <subcellularLocation>
        <location evidence="4">Plastid</location>
        <location evidence="4">Chloroplast outer membrane</location>
        <topology evidence="1">Single-pass membrane protein</topology>
    </subcellularLocation>
    <subcellularLocation>
        <location evidence="2">Endoplasmic reticulum</location>
    </subcellularLocation>
    <text>According to PubMed:18689504 TGD4 localizes to the ER (GFP experiment), but PubMed:22269056 found that TDG4 was located in the chloroplast outer envelope using cell fractionation.</text>
</comment>
<comment type="alternative products">
    <event type="alternative splicing"/>
    <isoform>
        <id>Q9M903-1</id>
        <name>1</name>
        <sequence type="displayed"/>
    </isoform>
    <text>A number of isoforms are produced. According to EST sequences.</text>
</comment>
<comment type="domain">
    <text evidence="5">Amino acids 110-145 are necessary and sufficient for phosphatidic acid binding, while amino acids 1-80 are only necessary.</text>
</comment>
<comment type="disruption phenotype">
    <text evidence="2 3 4">Stunted, pale yellow and infertile plants, which accumulate oligogalactoglycerolipids and phosphatidates.</text>
</comment>
<feature type="chain" id="PRO_0000424527" description="Protein TRIGALACTOSYLDIACYLGLYCEROL 4, chloroplastic">
    <location>
        <begin position="1"/>
        <end position="479"/>
    </location>
</feature>
<feature type="transmembrane region" evidence="1">
    <location>
        <begin position="288"/>
        <end position="310"/>
    </location>
</feature>
<feature type="mutagenesis site" description="In tgd4-1; accumulation of trigalactosyldiacylglycerol (TGDG) in leaves and slightly pale green phenotype." evidence="2">
    <original>P</original>
    <variation>L</variation>
    <location>
        <position position="20"/>
    </location>
</feature>
<feature type="mutagenesis site" description="No effect on phosphatidic acid binding." evidence="5">
    <original>K</original>
    <variation>A</variation>
    <location>
        <position position="114"/>
    </location>
</feature>
<feature type="mutagenesis site" description="No effect on phosphatidic acid binding." evidence="5">
    <original>K</original>
    <variation>A</variation>
    <location>
        <position position="116"/>
    </location>
</feature>
<feature type="mutagenesis site" description="No effect on phosphatidic acid binding." evidence="5">
    <original>R</original>
    <variation>A</variation>
    <location>
        <position position="120"/>
    </location>
</feature>
<feature type="mutagenesis site" description="40% decreased phosphatidic acid binding." evidence="5">
    <original>S</original>
    <variation>A</variation>
    <location>
        <position position="128"/>
    </location>
</feature>
<feature type="mutagenesis site" description="40% decreased phosphatidic acid binding." evidence="5">
    <original>R</original>
    <variation>A</variation>
    <location>
        <position position="129"/>
    </location>
</feature>
<feature type="mutagenesis site" description="40% decreased phosphatidic acid binding." evidence="5">
    <original>K</original>
    <variation>A</variation>
    <location>
        <position position="135"/>
    </location>
</feature>
<feature type="mutagenesis site" description="40% decreased phosphatidic acid binding." evidence="5">
    <original>K</original>
    <variation>A</variation>
    <location>
        <position position="138"/>
    </location>
</feature>
<feature type="mutagenesis site" description="No effect on phosphatidic acid binding." evidence="5">
    <original>D</original>
    <variation>A</variation>
    <location>
        <position position="139"/>
    </location>
</feature>
<feature type="mutagenesis site" description="No effect on phosphatidic acid binding." evidence="5">
    <original>K</original>
    <variation>A</variation>
    <location>
        <position position="140"/>
    </location>
</feature>
<keyword id="KW-0025">Alternative splicing</keyword>
<keyword id="KW-0150">Chloroplast</keyword>
<keyword id="KW-0256">Endoplasmic reticulum</keyword>
<keyword id="KW-0445">Lipid transport</keyword>
<keyword id="KW-0472">Membrane</keyword>
<keyword id="KW-0934">Plastid</keyword>
<keyword id="KW-1002">Plastid outer membrane</keyword>
<keyword id="KW-1185">Reference proteome</keyword>
<keyword id="KW-0812">Transmembrane</keyword>
<keyword id="KW-1133">Transmembrane helix</keyword>
<keyword id="KW-0813">Transport</keyword>
<proteinExistence type="evidence at protein level"/>
<sequence length="479" mass="52822">MNRMRWVGEGDIWDLDMSTPVTLEGTARAVPDDPLPLGLSRGTRLSRPKQVEFFHRFMASPLIPSFSPIRPNTGDGGGGGFSLQRVLTLPFSNNWLVSLLGQFDVQRFVTEIDKTKAFGRGSSSTVASRLNTIGKHLKDKSLYALGFCSEFLLSPDDTLLLSYDAYKGDLDKNPRAKAIFNHEFPLHNLTAEAVWPGLFVDKHGEYWDVPLSMAIDLASLPAESGPSYHLCLHHNSGSPKKLHSDTMEVPPPSLLPGLSLKSAVSYRTNMDLWRGTTPKLETCKPYDVFLSSPHVAVSGIIGSVMTAAFGENSIRSKFENDSEGVGGFSLHFPSVNSGFMADALGRASLTAQYGNFQKFFFDLTRFHARLDFPHGLRFLTGATSVAQDLLNSRQPSLEAFQKICPEVLVSLQQQIVGPFSFKVESGIEIDLRNGANPVTVDKTVFAIEYALQVLLSAKAVVSYSPKQNEFMVELRFFET</sequence>
<protein>
    <recommendedName>
        <fullName evidence="7">Protein TRIGALACTOSYLDIACYLGLYCEROL 4, chloroplastic</fullName>
    </recommendedName>
    <alternativeName>
        <fullName>Protein PIGMENT DEFECTIVE 320</fullName>
    </alternativeName>
</protein>
<gene>
    <name evidence="7" type="primary">TGD4</name>
    <name type="synonym">PDE320</name>
    <name evidence="8" type="ordered locus">At3g06960</name>
    <name evidence="9" type="ORF">F17A9.11</name>
</gene>
<reference key="1">
    <citation type="journal article" date="2000" name="Nature">
        <title>Sequence and analysis of chromosome 3 of the plant Arabidopsis thaliana.</title>
        <authorList>
            <person name="Salanoubat M."/>
            <person name="Lemcke K."/>
            <person name="Rieger M."/>
            <person name="Ansorge W."/>
            <person name="Unseld M."/>
            <person name="Fartmann B."/>
            <person name="Valle G."/>
            <person name="Bloecker H."/>
            <person name="Perez-Alonso M."/>
            <person name="Obermaier B."/>
            <person name="Delseny M."/>
            <person name="Boutry M."/>
            <person name="Grivell L.A."/>
            <person name="Mache R."/>
            <person name="Puigdomenech P."/>
            <person name="De Simone V."/>
            <person name="Choisne N."/>
            <person name="Artiguenave F."/>
            <person name="Robert C."/>
            <person name="Brottier P."/>
            <person name="Wincker P."/>
            <person name="Cattolico L."/>
            <person name="Weissenbach J."/>
            <person name="Saurin W."/>
            <person name="Quetier F."/>
            <person name="Schaefer M."/>
            <person name="Mueller-Auer S."/>
            <person name="Gabel C."/>
            <person name="Fuchs M."/>
            <person name="Benes V."/>
            <person name="Wurmbach E."/>
            <person name="Drzonek H."/>
            <person name="Erfle H."/>
            <person name="Jordan N."/>
            <person name="Bangert S."/>
            <person name="Wiedelmann R."/>
            <person name="Kranz H."/>
            <person name="Voss H."/>
            <person name="Holland R."/>
            <person name="Brandt P."/>
            <person name="Nyakatura G."/>
            <person name="Vezzi A."/>
            <person name="D'Angelo M."/>
            <person name="Pallavicini A."/>
            <person name="Toppo S."/>
            <person name="Simionati B."/>
            <person name="Conrad A."/>
            <person name="Hornischer K."/>
            <person name="Kauer G."/>
            <person name="Loehnert T.-H."/>
            <person name="Nordsiek G."/>
            <person name="Reichelt J."/>
            <person name="Scharfe M."/>
            <person name="Schoen O."/>
            <person name="Bargues M."/>
            <person name="Terol J."/>
            <person name="Climent J."/>
            <person name="Navarro P."/>
            <person name="Collado C."/>
            <person name="Perez-Perez A."/>
            <person name="Ottenwaelder B."/>
            <person name="Duchemin D."/>
            <person name="Cooke R."/>
            <person name="Laudie M."/>
            <person name="Berger-Llauro C."/>
            <person name="Purnelle B."/>
            <person name="Masuy D."/>
            <person name="de Haan M."/>
            <person name="Maarse A.C."/>
            <person name="Alcaraz J.-P."/>
            <person name="Cottet A."/>
            <person name="Casacuberta E."/>
            <person name="Monfort A."/>
            <person name="Argiriou A."/>
            <person name="Flores M."/>
            <person name="Liguori R."/>
            <person name="Vitale D."/>
            <person name="Mannhaupt G."/>
            <person name="Haase D."/>
            <person name="Schoof H."/>
            <person name="Rudd S."/>
            <person name="Zaccaria P."/>
            <person name="Mewes H.-W."/>
            <person name="Mayer K.F.X."/>
            <person name="Kaul S."/>
            <person name="Town C.D."/>
            <person name="Koo H.L."/>
            <person name="Tallon L.J."/>
            <person name="Jenkins J."/>
            <person name="Rooney T."/>
            <person name="Rizzo M."/>
            <person name="Walts A."/>
            <person name="Utterback T."/>
            <person name="Fujii C.Y."/>
            <person name="Shea T.P."/>
            <person name="Creasy T.H."/>
            <person name="Haas B."/>
            <person name="Maiti R."/>
            <person name="Wu D."/>
            <person name="Peterson J."/>
            <person name="Van Aken S."/>
            <person name="Pai G."/>
            <person name="Militscher J."/>
            <person name="Sellers P."/>
            <person name="Gill J.E."/>
            <person name="Feldblyum T.V."/>
            <person name="Preuss D."/>
            <person name="Lin X."/>
            <person name="Nierman W.C."/>
            <person name="Salzberg S.L."/>
            <person name="White O."/>
            <person name="Venter J.C."/>
            <person name="Fraser C.M."/>
            <person name="Kaneko T."/>
            <person name="Nakamura Y."/>
            <person name="Sato S."/>
            <person name="Kato T."/>
            <person name="Asamizu E."/>
            <person name="Sasamoto S."/>
            <person name="Kimura T."/>
            <person name="Idesawa K."/>
            <person name="Kawashima K."/>
            <person name="Kishida Y."/>
            <person name="Kiyokawa C."/>
            <person name="Kohara M."/>
            <person name="Matsumoto M."/>
            <person name="Matsuno A."/>
            <person name="Muraki A."/>
            <person name="Nakayama S."/>
            <person name="Nakazaki N."/>
            <person name="Shinpo S."/>
            <person name="Takeuchi C."/>
            <person name="Wada T."/>
            <person name="Watanabe A."/>
            <person name="Yamada M."/>
            <person name="Yasuda M."/>
            <person name="Tabata S."/>
        </authorList>
    </citation>
    <scope>NUCLEOTIDE SEQUENCE [LARGE SCALE GENOMIC DNA]</scope>
    <source>
        <strain>cv. Columbia</strain>
    </source>
</reference>
<reference key="2">
    <citation type="journal article" date="2017" name="Plant J.">
        <title>Araport11: a complete reannotation of the Arabidopsis thaliana reference genome.</title>
        <authorList>
            <person name="Cheng C.Y."/>
            <person name="Krishnakumar V."/>
            <person name="Chan A.P."/>
            <person name="Thibaud-Nissen F."/>
            <person name="Schobel S."/>
            <person name="Town C.D."/>
        </authorList>
    </citation>
    <scope>GENOME REANNOTATION</scope>
    <source>
        <strain>cv. Columbia</strain>
    </source>
</reference>
<reference key="3">
    <citation type="journal article" date="2003" name="Science">
        <title>Empirical analysis of transcriptional activity in the Arabidopsis genome.</title>
        <authorList>
            <person name="Yamada K."/>
            <person name="Lim J."/>
            <person name="Dale J.M."/>
            <person name="Chen H."/>
            <person name="Shinn P."/>
            <person name="Palm C.J."/>
            <person name="Southwick A.M."/>
            <person name="Wu H.C."/>
            <person name="Kim C.J."/>
            <person name="Nguyen M."/>
            <person name="Pham P.K."/>
            <person name="Cheuk R.F."/>
            <person name="Karlin-Newmann G."/>
            <person name="Liu S.X."/>
            <person name="Lam B."/>
            <person name="Sakano H."/>
            <person name="Wu T."/>
            <person name="Yu G."/>
            <person name="Miranda M."/>
            <person name="Quach H.L."/>
            <person name="Tripp M."/>
            <person name="Chang C.H."/>
            <person name="Lee J.M."/>
            <person name="Toriumi M.J."/>
            <person name="Chan M.M."/>
            <person name="Tang C.C."/>
            <person name="Onodera C.S."/>
            <person name="Deng J.M."/>
            <person name="Akiyama K."/>
            <person name="Ansari Y."/>
            <person name="Arakawa T."/>
            <person name="Banh J."/>
            <person name="Banno F."/>
            <person name="Bowser L."/>
            <person name="Brooks S.Y."/>
            <person name="Carninci P."/>
            <person name="Chao Q."/>
            <person name="Choy N."/>
            <person name="Enju A."/>
            <person name="Goldsmith A.D."/>
            <person name="Gurjal M."/>
            <person name="Hansen N.F."/>
            <person name="Hayashizaki Y."/>
            <person name="Johnson-Hopson C."/>
            <person name="Hsuan V.W."/>
            <person name="Iida K."/>
            <person name="Karnes M."/>
            <person name="Khan S."/>
            <person name="Koesema E."/>
            <person name="Ishida J."/>
            <person name="Jiang P.X."/>
            <person name="Jones T."/>
            <person name="Kawai J."/>
            <person name="Kamiya A."/>
            <person name="Meyers C."/>
            <person name="Nakajima M."/>
            <person name="Narusaka M."/>
            <person name="Seki M."/>
            <person name="Sakurai T."/>
            <person name="Satou M."/>
            <person name="Tamse R."/>
            <person name="Vaysberg M."/>
            <person name="Wallender E.K."/>
            <person name="Wong C."/>
            <person name="Yamamura Y."/>
            <person name="Yuan S."/>
            <person name="Shinozaki K."/>
            <person name="Davis R.W."/>
            <person name="Theologis A."/>
            <person name="Ecker J.R."/>
        </authorList>
    </citation>
    <scope>NUCLEOTIDE SEQUENCE [LARGE SCALE MRNA]</scope>
    <source>
        <strain>cv. Columbia</strain>
    </source>
</reference>
<reference key="4">
    <citation type="journal article" date="2008" name="Plant Cell">
        <title>Lipid trafficking between the endoplasmic reticulum and the plastid in Arabidopsis requires the extraplastidic TGD4 protein.</title>
        <authorList>
            <person name="Xu C."/>
            <person name="Fan J."/>
            <person name="Cornish A.J."/>
            <person name="Benning C."/>
        </authorList>
    </citation>
    <scope>FUNCTION</scope>
    <scope>SUBCELLULAR LOCATION</scope>
    <scope>DISRUPTION PHENOTYPE</scope>
    <scope>MUTAGENESIS OF PRO-20</scope>
</reference>
<reference key="5">
    <citation type="journal article" date="2010" name="Plant Cell Physiol.">
        <title>Lipid transport mediated by Arabidopsis TGD proteins is unidirectional from the endoplasmic reticulum to the plastid.</title>
        <authorList>
            <person name="Xu C."/>
            <person name="Moellering E.R."/>
            <person name="Muthan B."/>
            <person name="Fan J."/>
            <person name="Benning C."/>
        </authorList>
    </citation>
    <scope>FUNCTION</scope>
    <scope>DISRUPTION PHENOTYPE</scope>
</reference>
<reference key="6">
    <citation type="journal article" date="2012" name="Plant J.">
        <title>TGD4 involved in endoplasmic reticulum-to-chloroplast lipid trafficking is a phosphatidic acid binding protein.</title>
        <authorList>
            <person name="Wang Z."/>
            <person name="Xu C."/>
            <person name="Benning C."/>
        </authorList>
    </citation>
    <scope>FUNCTION</scope>
    <scope>SUBCELLULAR LOCATION</scope>
    <scope>DISRUPTION PHENOTYPE</scope>
</reference>
<reference key="7">
    <citation type="journal article" date="2013" name="J. Biol. Chem.">
        <title>The phosphatidic acid binding site of the Arabidopsis trigalactosyldiacylglycerol 4 (TGD4) protein required for lipid import into chloroplasts.</title>
        <authorList>
            <person name="Wang Z."/>
            <person name="Anderson N.S."/>
            <person name="Benning C."/>
        </authorList>
    </citation>
    <scope>FUNCTION</scope>
    <scope>SUBUNIT</scope>
    <scope>DOMAIN</scope>
    <scope>MUTAGENESIS OF LYS-114; LYS-116; ARG-120; SER-128; ARG-129; LYS-135; LYS-138; ASP-139 AND LYS-140</scope>
</reference>
<reference key="8">
    <citation type="journal article" date="2015" name="Plant Cell">
        <title>Arabidopsis TRIGALACTOSYLDIACYLGLYCEROL5 interacts with TGD1, TGD2, and TGD4 to facilitate lipid transfer from the endoplasmic reticulum to plastids.</title>
        <authorList>
            <person name="Fan J."/>
            <person name="Zhai Z."/>
            <person name="Yan C."/>
            <person name="Xu C."/>
        </authorList>
    </citation>
    <scope>INTERACTION WITH TGD5</scope>
</reference>
<accession>Q9M903</accession>